<protein>
    <recommendedName>
        <fullName>Protein CrtJ</fullName>
    </recommendedName>
</protein>
<evidence type="ECO:0000255" key="1">
    <source>
        <dbReference type="PROSITE-ProRule" id="PRU00140"/>
    </source>
</evidence>
<feature type="chain" id="PRO_0000079369" description="Protein CrtJ">
    <location>
        <begin position="1"/>
        <end position="469"/>
    </location>
</feature>
<feature type="domain" description="PAS" evidence="1">
    <location>
        <begin position="153"/>
        <end position="225"/>
    </location>
</feature>
<reference key="1">
    <citation type="submission" date="1991-11" db="EMBL/GenBank/DDBJ databases">
        <authorList>
            <person name="Burke D.H."/>
            <person name="Alberti M."/>
            <person name="Armstrong G.A."/>
            <person name="Hearst J.E."/>
        </authorList>
    </citation>
    <scope>NUCLEOTIDE SEQUENCE [GENOMIC DNA]</scope>
</reference>
<organism>
    <name type="scientific">Rhodobacter capsulatus</name>
    <name type="common">Rhodopseudomonas capsulata</name>
    <dbReference type="NCBI Taxonomy" id="1061"/>
    <lineage>
        <taxon>Bacteria</taxon>
        <taxon>Pseudomonadati</taxon>
        <taxon>Pseudomonadota</taxon>
        <taxon>Alphaproteobacteria</taxon>
        <taxon>Rhodobacterales</taxon>
        <taxon>Rhodobacter group</taxon>
        <taxon>Rhodobacter</taxon>
    </lineage>
</organism>
<sequence length="469" mass="51364">MTSDGSFLMRREALQRVSPDLLADIVTSACDIALVVSPGRVVESVMVNPQFGSAERFAAWQGARLSQLFSPESAQKLENRLADGPEPGRSLQLELTHAADAFTLPVRYTITRSGEDGTLLLIGRDMQPLAEVQQQLVKAQLALERDYEAQREIETRYRVLLEAHPAPLLIVSMSTGRIADLNLAAAAMIGATRAELIDAPVGQELDGRRRGEFLENLAKIAGSDPLGAVELTIRRSRRKVTVTATLFRAAGDRLLLCRLGEAEARRTRVDDTVELSERLFLKGIDAMVFLDADGTIRAANDAFLYLTDAGSAALVQGRSFADFLSRGAVDLNVLLDNVKRIGHLRHYVTRLNTDFSGQVTVELSATLFHDRATPTIALVIRDSNLADATRIMPGMASNEGLRNVMQMVGYATLRDIVSETTEIIEKMCIETALELTGNNRVAAAELLSLSRQSLYVKLRKFGLLSKDAE</sequence>
<proteinExistence type="predicted"/>
<comment type="pathway">
    <text>Carotenoid biosynthesis; spheroidene biosynthesis.</text>
</comment>
<keyword id="KW-0125">Carotenoid biosynthesis</keyword>
<keyword id="KW-0149">Chlorophyll biosynthesis</keyword>
<keyword id="KW-0602">Photosynthesis</keyword>
<gene>
    <name type="primary">crtJ</name>
</gene>
<dbReference type="EMBL" id="Z11165">
    <property type="protein sequence ID" value="CAA77529.1"/>
    <property type="molecule type" value="Genomic_DNA"/>
</dbReference>
<dbReference type="PIR" id="S17813">
    <property type="entry name" value="S17813"/>
</dbReference>
<dbReference type="SMR" id="P26167"/>
<dbReference type="UniPathway" id="UPA00683"/>
<dbReference type="GO" id="GO:0043565">
    <property type="term" value="F:sequence-specific DNA binding"/>
    <property type="evidence" value="ECO:0007669"/>
    <property type="project" value="InterPro"/>
</dbReference>
<dbReference type="GO" id="GO:0016117">
    <property type="term" value="P:carotenoid biosynthetic process"/>
    <property type="evidence" value="ECO:0007669"/>
    <property type="project" value="UniProtKB-KW"/>
</dbReference>
<dbReference type="GO" id="GO:0015995">
    <property type="term" value="P:chlorophyll biosynthetic process"/>
    <property type="evidence" value="ECO:0007669"/>
    <property type="project" value="UniProtKB-KW"/>
</dbReference>
<dbReference type="GO" id="GO:0015979">
    <property type="term" value="P:photosynthesis"/>
    <property type="evidence" value="ECO:0007669"/>
    <property type="project" value="UniProtKB-KW"/>
</dbReference>
<dbReference type="CDD" id="cd00130">
    <property type="entry name" value="PAS"/>
    <property type="match status" value="2"/>
</dbReference>
<dbReference type="Gene3D" id="1.20.5.430">
    <property type="match status" value="1"/>
</dbReference>
<dbReference type="Gene3D" id="1.10.10.60">
    <property type="entry name" value="Homeodomain-like"/>
    <property type="match status" value="1"/>
</dbReference>
<dbReference type="Gene3D" id="3.30.450.20">
    <property type="entry name" value="PAS domain"/>
    <property type="match status" value="3"/>
</dbReference>
<dbReference type="InterPro" id="IPR009057">
    <property type="entry name" value="Homeodomain-like_sf"/>
</dbReference>
<dbReference type="InterPro" id="IPR002197">
    <property type="entry name" value="HTH_Fis"/>
</dbReference>
<dbReference type="InterPro" id="IPR000014">
    <property type="entry name" value="PAS"/>
</dbReference>
<dbReference type="InterPro" id="IPR035965">
    <property type="entry name" value="PAS-like_dom_sf"/>
</dbReference>
<dbReference type="InterPro" id="IPR011785">
    <property type="entry name" value="Tscrpt_reg_PpsR-CrtJ"/>
</dbReference>
<dbReference type="NCBIfam" id="TIGR02040">
    <property type="entry name" value="PpsR-CrtJ"/>
    <property type="match status" value="1"/>
</dbReference>
<dbReference type="Pfam" id="PF02954">
    <property type="entry name" value="HTH_8"/>
    <property type="match status" value="1"/>
</dbReference>
<dbReference type="Pfam" id="PF13188">
    <property type="entry name" value="PAS_8"/>
    <property type="match status" value="1"/>
</dbReference>
<dbReference type="Pfam" id="PF13426">
    <property type="entry name" value="PAS_9"/>
    <property type="match status" value="1"/>
</dbReference>
<dbReference type="PRINTS" id="PR01590">
    <property type="entry name" value="HTHFIS"/>
</dbReference>
<dbReference type="SMART" id="SM00091">
    <property type="entry name" value="PAS"/>
    <property type="match status" value="2"/>
</dbReference>
<dbReference type="SUPFAM" id="SSF46689">
    <property type="entry name" value="Homeodomain-like"/>
    <property type="match status" value="1"/>
</dbReference>
<dbReference type="SUPFAM" id="SSF55785">
    <property type="entry name" value="PYP-like sensor domain (PAS domain)"/>
    <property type="match status" value="2"/>
</dbReference>
<dbReference type="PROSITE" id="PS50112">
    <property type="entry name" value="PAS"/>
    <property type="match status" value="1"/>
</dbReference>
<name>CRTJ_RHOCA</name>
<accession>P26167</accession>